<comment type="function">
    <text evidence="1">Plays an important role in DNA replication, recombination and repair. Binds to ssDNA and to an array of partner proteins to recruit them to their sites of action during DNA metabolism.</text>
</comment>
<comment type="subunit">
    <text evidence="1">Homotetramer.</text>
</comment>
<keyword id="KW-0227">DNA damage</keyword>
<keyword id="KW-0233">DNA recombination</keyword>
<keyword id="KW-0234">DNA repair</keyword>
<keyword id="KW-0235">DNA replication</keyword>
<keyword id="KW-0238">DNA-binding</keyword>
<accession>P59928</accession>
<accession>Q7W2B2</accession>
<sequence>MASVNKVILVGNLGRDPEVRYSPDGAAICNVSIATTSQWKDKASGERREETEWHRVVMYNRLAEIAGEYLKKGRSVYIEGRLKTRKWQDKDTGADRYSTEIVADQMQMLGGRDSGGGYGGGYDDAPRQQRAPAQRPAAAPQRPAPQAAPAANLADMDDDIPF</sequence>
<reference key="1">
    <citation type="journal article" date="2003" name="Nat. Genet.">
        <title>Comparative analysis of the genome sequences of Bordetella pertussis, Bordetella parapertussis and Bordetella bronchiseptica.</title>
        <authorList>
            <person name="Parkhill J."/>
            <person name="Sebaihia M."/>
            <person name="Preston A."/>
            <person name="Murphy L.D."/>
            <person name="Thomson N.R."/>
            <person name="Harris D.E."/>
            <person name="Holden M.T.G."/>
            <person name="Churcher C.M."/>
            <person name="Bentley S.D."/>
            <person name="Mungall K.L."/>
            <person name="Cerdeno-Tarraga A.-M."/>
            <person name="Temple L."/>
            <person name="James K.D."/>
            <person name="Harris B."/>
            <person name="Quail M.A."/>
            <person name="Achtman M."/>
            <person name="Atkin R."/>
            <person name="Baker S."/>
            <person name="Basham D."/>
            <person name="Bason N."/>
            <person name="Cherevach I."/>
            <person name="Chillingworth T."/>
            <person name="Collins M."/>
            <person name="Cronin A."/>
            <person name="Davis P."/>
            <person name="Doggett J."/>
            <person name="Feltwell T."/>
            <person name="Goble A."/>
            <person name="Hamlin N."/>
            <person name="Hauser H."/>
            <person name="Holroyd S."/>
            <person name="Jagels K."/>
            <person name="Leather S."/>
            <person name="Moule S."/>
            <person name="Norberczak H."/>
            <person name="O'Neil S."/>
            <person name="Ormond D."/>
            <person name="Price C."/>
            <person name="Rabbinowitsch E."/>
            <person name="Rutter S."/>
            <person name="Sanders M."/>
            <person name="Saunders D."/>
            <person name="Seeger K."/>
            <person name="Sharp S."/>
            <person name="Simmonds M."/>
            <person name="Skelton J."/>
            <person name="Squares R."/>
            <person name="Squares S."/>
            <person name="Stevens K."/>
            <person name="Unwin L."/>
            <person name="Whitehead S."/>
            <person name="Barrell B.G."/>
            <person name="Maskell D.J."/>
        </authorList>
    </citation>
    <scope>NUCLEOTIDE SEQUENCE [LARGE SCALE GENOMIC DNA]</scope>
    <source>
        <strain>12822 / ATCC BAA-587 / NCTC 13253</strain>
    </source>
</reference>
<dbReference type="EMBL" id="BX640423">
    <property type="protein sequence ID" value="CAE39818.1"/>
    <property type="molecule type" value="Genomic_DNA"/>
</dbReference>
<dbReference type="RefSeq" id="WP_010927278.1">
    <property type="nucleotide sequence ID" value="NC_002928.3"/>
</dbReference>
<dbReference type="SMR" id="P59928"/>
<dbReference type="GeneID" id="93206308"/>
<dbReference type="KEGG" id="bpa:BPP0077"/>
<dbReference type="HOGENOM" id="CLU_078758_0_2_4"/>
<dbReference type="Proteomes" id="UP000001421">
    <property type="component" value="Chromosome"/>
</dbReference>
<dbReference type="GO" id="GO:0009295">
    <property type="term" value="C:nucleoid"/>
    <property type="evidence" value="ECO:0007669"/>
    <property type="project" value="TreeGrafter"/>
</dbReference>
<dbReference type="GO" id="GO:0003697">
    <property type="term" value="F:single-stranded DNA binding"/>
    <property type="evidence" value="ECO:0007669"/>
    <property type="project" value="UniProtKB-UniRule"/>
</dbReference>
<dbReference type="GO" id="GO:0006310">
    <property type="term" value="P:DNA recombination"/>
    <property type="evidence" value="ECO:0007669"/>
    <property type="project" value="UniProtKB-UniRule"/>
</dbReference>
<dbReference type="GO" id="GO:0006281">
    <property type="term" value="P:DNA repair"/>
    <property type="evidence" value="ECO:0007669"/>
    <property type="project" value="UniProtKB-UniRule"/>
</dbReference>
<dbReference type="GO" id="GO:0006260">
    <property type="term" value="P:DNA replication"/>
    <property type="evidence" value="ECO:0007669"/>
    <property type="project" value="UniProtKB-UniRule"/>
</dbReference>
<dbReference type="CDD" id="cd04496">
    <property type="entry name" value="SSB_OBF"/>
    <property type="match status" value="1"/>
</dbReference>
<dbReference type="Gene3D" id="2.40.50.140">
    <property type="entry name" value="Nucleic acid-binding proteins"/>
    <property type="match status" value="1"/>
</dbReference>
<dbReference type="HAMAP" id="MF_00984">
    <property type="entry name" value="SSB"/>
    <property type="match status" value="1"/>
</dbReference>
<dbReference type="InterPro" id="IPR012340">
    <property type="entry name" value="NA-bd_OB-fold"/>
</dbReference>
<dbReference type="InterPro" id="IPR000424">
    <property type="entry name" value="Primosome_PriB/ssb"/>
</dbReference>
<dbReference type="InterPro" id="IPR011344">
    <property type="entry name" value="ssDNA-bd"/>
</dbReference>
<dbReference type="NCBIfam" id="TIGR00621">
    <property type="entry name" value="ssb"/>
    <property type="match status" value="1"/>
</dbReference>
<dbReference type="PANTHER" id="PTHR10302">
    <property type="entry name" value="SINGLE-STRANDED DNA-BINDING PROTEIN"/>
    <property type="match status" value="1"/>
</dbReference>
<dbReference type="PANTHER" id="PTHR10302:SF27">
    <property type="entry name" value="SINGLE-STRANDED DNA-BINDING PROTEIN"/>
    <property type="match status" value="1"/>
</dbReference>
<dbReference type="Pfam" id="PF00436">
    <property type="entry name" value="SSB"/>
    <property type="match status" value="1"/>
</dbReference>
<dbReference type="PIRSF" id="PIRSF002070">
    <property type="entry name" value="SSB"/>
    <property type="match status" value="1"/>
</dbReference>
<dbReference type="SUPFAM" id="SSF50249">
    <property type="entry name" value="Nucleic acid-binding proteins"/>
    <property type="match status" value="1"/>
</dbReference>
<dbReference type="PROSITE" id="PS50935">
    <property type="entry name" value="SSB"/>
    <property type="match status" value="1"/>
</dbReference>
<proteinExistence type="inferred from homology"/>
<gene>
    <name type="primary">ssb</name>
    <name type="ordered locus">BPP0077</name>
</gene>
<evidence type="ECO:0000255" key="1">
    <source>
        <dbReference type="HAMAP-Rule" id="MF_00984"/>
    </source>
</evidence>
<evidence type="ECO:0000256" key="2">
    <source>
        <dbReference type="SAM" id="MobiDB-lite"/>
    </source>
</evidence>
<feature type="chain" id="PRO_0000096009" description="Single-stranded DNA-binding protein">
    <location>
        <begin position="1"/>
        <end position="162"/>
    </location>
</feature>
<feature type="domain" description="SSB" evidence="1">
    <location>
        <begin position="4"/>
        <end position="110"/>
    </location>
</feature>
<feature type="region of interest" description="Disordered" evidence="2">
    <location>
        <begin position="108"/>
        <end position="162"/>
    </location>
</feature>
<feature type="short sequence motif" description="Important for interaction with partner proteins" evidence="1">
    <location>
        <begin position="157"/>
        <end position="162"/>
    </location>
</feature>
<feature type="compositionally biased region" description="Gly residues" evidence="2">
    <location>
        <begin position="112"/>
        <end position="122"/>
    </location>
</feature>
<feature type="compositionally biased region" description="Low complexity" evidence="2">
    <location>
        <begin position="128"/>
        <end position="151"/>
    </location>
</feature>
<organism>
    <name type="scientific">Bordetella parapertussis (strain 12822 / ATCC BAA-587 / NCTC 13253)</name>
    <dbReference type="NCBI Taxonomy" id="257311"/>
    <lineage>
        <taxon>Bacteria</taxon>
        <taxon>Pseudomonadati</taxon>
        <taxon>Pseudomonadota</taxon>
        <taxon>Betaproteobacteria</taxon>
        <taxon>Burkholderiales</taxon>
        <taxon>Alcaligenaceae</taxon>
        <taxon>Bordetella</taxon>
    </lineage>
</organism>
<name>SSB_BORPA</name>
<protein>
    <recommendedName>
        <fullName evidence="1">Single-stranded DNA-binding protein</fullName>
        <shortName evidence="1">SSB</shortName>
    </recommendedName>
</protein>